<name>ENTP5_BOVIN</name>
<proteinExistence type="inferred from homology"/>
<feature type="signal peptide" evidence="4">
    <location>
        <begin position="1"/>
        <end position="24"/>
    </location>
</feature>
<feature type="chain" id="PRO_0000404541" description="Ectonucleoside triphosphate diphosphohydrolase 5">
    <location>
        <begin position="25"/>
        <end position="432"/>
    </location>
</feature>
<feature type="active site" description="Proton acceptor" evidence="3">
    <location>
        <position position="175"/>
    </location>
</feature>
<feature type="glycosylation site" description="N-linked (GlcNAc...) asparagine" evidence="4">
    <location>
        <position position="235"/>
    </location>
</feature>
<feature type="glycosylation site" description="N-linked (GlcNAc...) asparagine" evidence="4">
    <location>
        <position position="372"/>
    </location>
</feature>
<feature type="disulfide bond" evidence="1">
    <location>
        <begin position="275"/>
        <end position="307"/>
    </location>
</feature>
<feature type="disulfide bond" evidence="1">
    <location>
        <begin position="367"/>
        <end position="381"/>
    </location>
</feature>
<accession>E1BPW0</accession>
<gene>
    <name type="primary">ENTPD5</name>
</gene>
<reference key="1">
    <citation type="journal article" date="2009" name="Science">
        <title>The genome sequence of taurine cattle: a window to ruminant biology and evolution.</title>
        <authorList>
            <consortium name="The bovine genome sequencing and analysis consortium"/>
        </authorList>
    </citation>
    <scope>NUCLEOTIDE SEQUENCE [LARGE SCALE GENOMIC DNA]</scope>
</reference>
<sequence length="432" mass="47888">MALYQGAAFFMLVASCVCSTVFHREQQTWFEGVFLSSMCPVNVSAGTLYGIMFDAGSTGTRIHVYTFVQKVPDNTGQLPVLEGEIFDSVKPGLSAFVDQPKQGAETVQELLEVAKDSIPPSHWKRTPVVLKATAGLRLLPEEKAEALLFEVKEIFKKSPFLVPDDSVSIMDGSYEGILAWVTVNFLTGQLHGHNQETVGTLDLGGASTQITFLPQFEKTLEQTPRDYLTSFEMFNSTYKLYTHSYLGFGLKAARLATLGALETAGIDGYTFRSACLPRWLEAEWIFGGVKYQYGGNQEAGEVGFEPCYAEVLRVVQGKLHQPDEVQRGSFYAFSYYYDRAVDTDMIDYEKGGVLKVEDFERKAREVCDNLENFTSGSPFLCMDLSYITALLKDGFGFASSTVLQLTKKVNNIETGWALGATFHLLQSLGISH</sequence>
<comment type="function">
    <text evidence="2 3">Hydrolyzes nucleoside diphosphates with a preference for GDP, IDP and UDP compared to ADP and CDP (By similarity). In the lumen of the endoplasmic reticulum, hydrolyzes UDP that acts as an end-product feedback inhibitor of the UDP-Glc:glycoprotein glucosyltransferases. UMP can be transported back by an UDP-sugar antiporter to the cytosol where it is consumed to regenerate UDP-glucose. Therefore, it positively regulates protein reglucosylation by clearing UDP from the ER lumen and by promoting the regeneration of UDP-glucose. Protein reglucosylation is essential to proper glycoprotein folding and quality control in the ER (By similarity).</text>
</comment>
<comment type="catalytic activity">
    <reaction evidence="2">
        <text>a ribonucleoside 5'-diphosphate + H2O = a ribonucleoside 5'-phosphate + phosphate + H(+)</text>
        <dbReference type="Rhea" id="RHEA:36799"/>
        <dbReference type="ChEBI" id="CHEBI:15377"/>
        <dbReference type="ChEBI" id="CHEBI:15378"/>
        <dbReference type="ChEBI" id="CHEBI:43474"/>
        <dbReference type="ChEBI" id="CHEBI:57930"/>
        <dbReference type="ChEBI" id="CHEBI:58043"/>
        <dbReference type="EC" id="3.6.1.6"/>
    </reaction>
    <physiologicalReaction direction="left-to-right" evidence="2">
        <dbReference type="Rhea" id="RHEA:36800"/>
    </physiologicalReaction>
</comment>
<comment type="catalytic activity">
    <reaction evidence="2">
        <text>GDP + H2O = GMP + phosphate + H(+)</text>
        <dbReference type="Rhea" id="RHEA:22156"/>
        <dbReference type="ChEBI" id="CHEBI:15377"/>
        <dbReference type="ChEBI" id="CHEBI:15378"/>
        <dbReference type="ChEBI" id="CHEBI:43474"/>
        <dbReference type="ChEBI" id="CHEBI:58115"/>
        <dbReference type="ChEBI" id="CHEBI:58189"/>
        <dbReference type="EC" id="3.6.1.6"/>
    </reaction>
    <physiologicalReaction direction="left-to-right" evidence="2">
        <dbReference type="Rhea" id="RHEA:22157"/>
    </physiologicalReaction>
</comment>
<comment type="catalytic activity">
    <reaction evidence="2">
        <text>UDP + H2O = UMP + phosphate + H(+)</text>
        <dbReference type="Rhea" id="RHEA:64876"/>
        <dbReference type="ChEBI" id="CHEBI:15377"/>
        <dbReference type="ChEBI" id="CHEBI:15378"/>
        <dbReference type="ChEBI" id="CHEBI:43474"/>
        <dbReference type="ChEBI" id="CHEBI:57865"/>
        <dbReference type="ChEBI" id="CHEBI:58223"/>
        <dbReference type="EC" id="3.6.1.6"/>
    </reaction>
    <physiologicalReaction direction="left-to-right" evidence="2">
        <dbReference type="Rhea" id="RHEA:64877"/>
    </physiologicalReaction>
</comment>
<comment type="catalytic activity">
    <reaction evidence="2">
        <text>IDP + H2O = IMP + phosphate + H(+)</text>
        <dbReference type="Rhea" id="RHEA:35207"/>
        <dbReference type="ChEBI" id="CHEBI:15377"/>
        <dbReference type="ChEBI" id="CHEBI:15378"/>
        <dbReference type="ChEBI" id="CHEBI:43474"/>
        <dbReference type="ChEBI" id="CHEBI:58053"/>
        <dbReference type="ChEBI" id="CHEBI:58280"/>
        <dbReference type="EC" id="3.6.1.6"/>
    </reaction>
    <physiologicalReaction direction="left-to-right" evidence="2">
        <dbReference type="Rhea" id="RHEA:35208"/>
    </physiologicalReaction>
</comment>
<comment type="catalytic activity">
    <reaction evidence="2">
        <text>CDP + H2O = CMP + phosphate + H(+)</text>
        <dbReference type="Rhea" id="RHEA:64880"/>
        <dbReference type="ChEBI" id="CHEBI:15377"/>
        <dbReference type="ChEBI" id="CHEBI:15378"/>
        <dbReference type="ChEBI" id="CHEBI:43474"/>
        <dbReference type="ChEBI" id="CHEBI:58069"/>
        <dbReference type="ChEBI" id="CHEBI:60377"/>
        <dbReference type="EC" id="3.6.1.6"/>
    </reaction>
    <physiologicalReaction direction="left-to-right" evidence="2">
        <dbReference type="Rhea" id="RHEA:64881"/>
    </physiologicalReaction>
</comment>
<comment type="catalytic activity">
    <reaction evidence="2">
        <text>ADP + H2O = AMP + phosphate + H(+)</text>
        <dbReference type="Rhea" id="RHEA:61436"/>
        <dbReference type="ChEBI" id="CHEBI:15377"/>
        <dbReference type="ChEBI" id="CHEBI:15378"/>
        <dbReference type="ChEBI" id="CHEBI:43474"/>
        <dbReference type="ChEBI" id="CHEBI:456215"/>
        <dbReference type="ChEBI" id="CHEBI:456216"/>
        <dbReference type="EC" id="3.6.1.6"/>
    </reaction>
    <physiologicalReaction direction="left-to-right" evidence="2">
        <dbReference type="Rhea" id="RHEA:61437"/>
    </physiologicalReaction>
</comment>
<comment type="cofactor">
    <cofactor evidence="2">
        <name>Ca(2+)</name>
        <dbReference type="ChEBI" id="CHEBI:29108"/>
    </cofactor>
    <cofactor evidence="2">
        <name>Mg(2+)</name>
        <dbReference type="ChEBI" id="CHEBI:18420"/>
    </cofactor>
</comment>
<comment type="pathway">
    <text evidence="3">Protein modification; protein glycosylation.</text>
</comment>
<comment type="subunit">
    <text evidence="2">Monomer; active form. Homodimer; disulfide-linked. Homodimers are enzymatically inactive.</text>
</comment>
<comment type="subcellular location">
    <subcellularLocation>
        <location evidence="3">Endoplasmic reticulum</location>
    </subcellularLocation>
    <subcellularLocation>
        <location evidence="2">Secreted</location>
    </subcellularLocation>
</comment>
<comment type="PTM">
    <text evidence="3">N-glycosylated; high-mannose type.</text>
</comment>
<comment type="similarity">
    <text evidence="5">Belongs to the GDA1/CD39 NTPase family.</text>
</comment>
<keyword id="KW-0106">Calcium</keyword>
<keyword id="KW-1015">Disulfide bond</keyword>
<keyword id="KW-0256">Endoplasmic reticulum</keyword>
<keyword id="KW-0325">Glycoprotein</keyword>
<keyword id="KW-0378">Hydrolase</keyword>
<keyword id="KW-0460">Magnesium</keyword>
<keyword id="KW-1185">Reference proteome</keyword>
<keyword id="KW-0964">Secreted</keyword>
<keyword id="KW-0732">Signal</keyword>
<organism>
    <name type="scientific">Bos taurus</name>
    <name type="common">Bovine</name>
    <dbReference type="NCBI Taxonomy" id="9913"/>
    <lineage>
        <taxon>Eukaryota</taxon>
        <taxon>Metazoa</taxon>
        <taxon>Chordata</taxon>
        <taxon>Craniata</taxon>
        <taxon>Vertebrata</taxon>
        <taxon>Euteleostomi</taxon>
        <taxon>Mammalia</taxon>
        <taxon>Eutheria</taxon>
        <taxon>Laurasiatheria</taxon>
        <taxon>Artiodactyla</taxon>
        <taxon>Ruminantia</taxon>
        <taxon>Pecora</taxon>
        <taxon>Bovidae</taxon>
        <taxon>Bovinae</taxon>
        <taxon>Bos</taxon>
    </lineage>
</organism>
<protein>
    <recommendedName>
        <fullName evidence="3">Ectonucleoside triphosphate diphosphohydrolase 5</fullName>
        <shortName>NTPDase 5</shortName>
        <ecNumber evidence="3">3.6.1.6</ecNumber>
    </recommendedName>
    <alternativeName>
        <fullName>Guanosine-diphosphatase ENTPD5</fullName>
        <shortName>GDPase ENTPD5</shortName>
    </alternativeName>
    <alternativeName>
        <fullName>Uridine-diphosphatase ENTPD5</fullName>
        <shortName>UDPase ENTPD5</shortName>
    </alternativeName>
</protein>
<dbReference type="EC" id="3.6.1.6" evidence="3"/>
<dbReference type="EMBL" id="AAFC03056279">
    <property type="status" value="NOT_ANNOTATED_CDS"/>
    <property type="molecule type" value="Genomic_DNA"/>
</dbReference>
<dbReference type="SMR" id="E1BPW0"/>
<dbReference type="FunCoup" id="E1BPW0">
    <property type="interactions" value="2020"/>
</dbReference>
<dbReference type="STRING" id="9913.ENSBTAP00000027098"/>
<dbReference type="GlyCosmos" id="E1BPW0">
    <property type="glycosylation" value="2 sites, No reported glycans"/>
</dbReference>
<dbReference type="GlyGen" id="E1BPW0">
    <property type="glycosylation" value="2 sites"/>
</dbReference>
<dbReference type="PaxDb" id="9913-ENSBTAP00000027098"/>
<dbReference type="PeptideAtlas" id="E1BPW0"/>
<dbReference type="eggNOG" id="KOG1385">
    <property type="taxonomic scope" value="Eukaryota"/>
</dbReference>
<dbReference type="HOGENOM" id="CLU_010246_0_2_1"/>
<dbReference type="InParanoid" id="E1BPW0"/>
<dbReference type="OrthoDB" id="6372431at2759"/>
<dbReference type="UniPathway" id="UPA00378"/>
<dbReference type="Proteomes" id="UP000009136">
    <property type="component" value="Unplaced"/>
</dbReference>
<dbReference type="GO" id="GO:0005783">
    <property type="term" value="C:endoplasmic reticulum"/>
    <property type="evidence" value="ECO:0000250"/>
    <property type="project" value="UniProtKB"/>
</dbReference>
<dbReference type="GO" id="GO:0005576">
    <property type="term" value="C:extracellular region"/>
    <property type="evidence" value="ECO:0007669"/>
    <property type="project" value="UniProtKB-SubCell"/>
</dbReference>
<dbReference type="GO" id="GO:0043262">
    <property type="term" value="F:ADP phosphatase activity"/>
    <property type="evidence" value="ECO:0007669"/>
    <property type="project" value="RHEA"/>
</dbReference>
<dbReference type="GO" id="GO:0036384">
    <property type="term" value="F:CDP phosphatase activity"/>
    <property type="evidence" value="ECO:0007669"/>
    <property type="project" value="RHEA"/>
</dbReference>
<dbReference type="GO" id="GO:0004382">
    <property type="term" value="F:GDP phosphatase activity"/>
    <property type="evidence" value="ECO:0000250"/>
    <property type="project" value="UniProtKB"/>
</dbReference>
<dbReference type="GO" id="GO:1990003">
    <property type="term" value="F:IDP phosphatase activity"/>
    <property type="evidence" value="ECO:0007669"/>
    <property type="project" value="RHEA"/>
</dbReference>
<dbReference type="GO" id="GO:0045134">
    <property type="term" value="F:UDP phosphatase activity"/>
    <property type="evidence" value="ECO:0000250"/>
    <property type="project" value="UniProtKB"/>
</dbReference>
<dbReference type="GO" id="GO:0051084">
    <property type="term" value="P:'de novo' post-translational protein folding"/>
    <property type="evidence" value="ECO:0000250"/>
    <property type="project" value="UniProtKB"/>
</dbReference>
<dbReference type="GO" id="GO:0006487">
    <property type="term" value="P:protein N-linked glycosylation"/>
    <property type="evidence" value="ECO:0000250"/>
    <property type="project" value="UniProtKB"/>
</dbReference>
<dbReference type="GO" id="GO:0006256">
    <property type="term" value="P:UDP catabolic process"/>
    <property type="evidence" value="ECO:0000250"/>
    <property type="project" value="UniProtKB"/>
</dbReference>
<dbReference type="GO" id="GO:0006011">
    <property type="term" value="P:UDP-alpha-D-glucose metabolic process"/>
    <property type="evidence" value="ECO:0000250"/>
    <property type="project" value="UniProtKB"/>
</dbReference>
<dbReference type="CDD" id="cd24114">
    <property type="entry name" value="ASKHA_NBD_NTPDase5"/>
    <property type="match status" value="1"/>
</dbReference>
<dbReference type="FunFam" id="3.30.420.150:FF:000004">
    <property type="entry name" value="Ectonucleoside triphosphate diphosphohydrolase 5"/>
    <property type="match status" value="1"/>
</dbReference>
<dbReference type="FunFam" id="3.30.420.40:FF:000052">
    <property type="entry name" value="Ectonucleoside triphosphate diphosphohydrolase 5"/>
    <property type="match status" value="1"/>
</dbReference>
<dbReference type="Gene3D" id="3.30.420.40">
    <property type="match status" value="1"/>
</dbReference>
<dbReference type="Gene3D" id="3.30.420.150">
    <property type="entry name" value="Exopolyphosphatase. Domain 2"/>
    <property type="match status" value="1"/>
</dbReference>
<dbReference type="InterPro" id="IPR000407">
    <property type="entry name" value="GDA1_CD39_NTPase"/>
</dbReference>
<dbReference type="PANTHER" id="PTHR11782">
    <property type="entry name" value="ADENOSINE/GUANOSINE DIPHOSPHATASE"/>
    <property type="match status" value="1"/>
</dbReference>
<dbReference type="PANTHER" id="PTHR11782:SF35">
    <property type="entry name" value="NUCLEOSIDE DIPHOSPHATE PHOSPHATASE ENTPD5"/>
    <property type="match status" value="1"/>
</dbReference>
<dbReference type="Pfam" id="PF01150">
    <property type="entry name" value="GDA1_CD39"/>
    <property type="match status" value="1"/>
</dbReference>
<dbReference type="PROSITE" id="PS01238">
    <property type="entry name" value="GDA1_CD39_NTPASE"/>
    <property type="match status" value="1"/>
</dbReference>
<evidence type="ECO:0000250" key="1"/>
<evidence type="ECO:0000250" key="2">
    <source>
        <dbReference type="UniProtKB" id="O75356"/>
    </source>
</evidence>
<evidence type="ECO:0000250" key="3">
    <source>
        <dbReference type="UniProtKB" id="Q9WUZ9"/>
    </source>
</evidence>
<evidence type="ECO:0000255" key="4"/>
<evidence type="ECO:0000305" key="5"/>